<sequence>MCSIFGVFDIKTDAVELRKKALELSRLMRHRGPDWSGIYASDNAILAHERLSIVDVNAGAQPLYNQQKTHVLAVNGEIYNHQALRAEYGDRYQFQTGSDCEVILALYQEKGPEFLDDLQGMFAFALYDSEKDAYLIGRDHLGIIPLYMGYDEHGQLYVASEMKALVPVCRTIKEFPAGSYLWSQDGEIRSYYHRDWFDYDAVKDNVTDKNELRQALEDSVKSHLMSDVPYGVLLSGGLDSSIISAITKKYAARRVEDQERSEAWWPQLHSFAVGLPGSPDLKAAQEVANHLGTVHHEIHFTVQEGLDAIRDVIYHIETYDVTTIRASTPMYLMSRKIKAMGIKMVLSGEGSDEVFGGYLYFHKAPNAKELHEETVRKLLALHMYDCARANKAMSAWGVEARVPFLDKKFLDVAMRINPQDKMCGNGKMEKHILRECFEAYLPASVAWRQKEQFSDGVGYSWIDTLKEVAAQQVSDQQLETARFRFPYNTPTSKEAYLYREIFEELFPLPSAAECVPGGPSVACSSAKAIEWDEAFKKMDDPSGRAVGVHQSAYK</sequence>
<reference key="1">
    <citation type="journal article" date="1990" name="J. Biol. Chem.">
        <title>Nucleotide sequence of Escherichia coli asnB and deduced amino acid sequence of asparagine synthetase B.</title>
        <authorList>
            <person name="Scofield M.A."/>
            <person name="Lewis W.S."/>
            <person name="Schuster S.M."/>
        </authorList>
    </citation>
    <scope>NUCLEOTIDE SEQUENCE [GENOMIC DNA]</scope>
    <source>
        <strain>K12</strain>
    </source>
</reference>
<reference key="2">
    <citation type="journal article" date="1996" name="DNA Res.">
        <title>A 718-kb DNA sequence of the Escherichia coli K-12 genome corresponding to the 12.7-28.0 min region on the linkage map.</title>
        <authorList>
            <person name="Oshima T."/>
            <person name="Aiba H."/>
            <person name="Baba T."/>
            <person name="Fujita K."/>
            <person name="Hayashi K."/>
            <person name="Honjo A."/>
            <person name="Ikemoto K."/>
            <person name="Inada T."/>
            <person name="Itoh T."/>
            <person name="Kajihara M."/>
            <person name="Kanai K."/>
            <person name="Kashimoto K."/>
            <person name="Kimura S."/>
            <person name="Kitagawa M."/>
            <person name="Makino K."/>
            <person name="Masuda S."/>
            <person name="Miki T."/>
            <person name="Mizobuchi K."/>
            <person name="Mori H."/>
            <person name="Motomura K."/>
            <person name="Nakamura Y."/>
            <person name="Nashimoto H."/>
            <person name="Nishio Y."/>
            <person name="Saito N."/>
            <person name="Sampei G."/>
            <person name="Seki Y."/>
            <person name="Tagami H."/>
            <person name="Takemoto K."/>
            <person name="Wada C."/>
            <person name="Yamamoto Y."/>
            <person name="Yano M."/>
            <person name="Horiuchi T."/>
        </authorList>
    </citation>
    <scope>NUCLEOTIDE SEQUENCE [LARGE SCALE GENOMIC DNA]</scope>
    <source>
        <strain>K12 / W3110 / ATCC 27325 / DSM 5911</strain>
    </source>
</reference>
<reference key="3">
    <citation type="journal article" date="1997" name="Science">
        <title>The complete genome sequence of Escherichia coli K-12.</title>
        <authorList>
            <person name="Blattner F.R."/>
            <person name="Plunkett G. III"/>
            <person name="Bloch C.A."/>
            <person name="Perna N.T."/>
            <person name="Burland V."/>
            <person name="Riley M."/>
            <person name="Collado-Vides J."/>
            <person name="Glasner J.D."/>
            <person name="Rode C.K."/>
            <person name="Mayhew G.F."/>
            <person name="Gregor J."/>
            <person name="Davis N.W."/>
            <person name="Kirkpatrick H.A."/>
            <person name="Goeden M.A."/>
            <person name="Rose D.J."/>
            <person name="Mau B."/>
            <person name="Shao Y."/>
        </authorList>
    </citation>
    <scope>NUCLEOTIDE SEQUENCE [LARGE SCALE GENOMIC DNA]</scope>
    <source>
        <strain>K12 / MG1655 / ATCC 47076</strain>
    </source>
</reference>
<reference key="4">
    <citation type="journal article" date="2006" name="Mol. Syst. Biol.">
        <title>Highly accurate genome sequences of Escherichia coli K-12 strains MG1655 and W3110.</title>
        <authorList>
            <person name="Hayashi K."/>
            <person name="Morooka N."/>
            <person name="Yamamoto Y."/>
            <person name="Fujita K."/>
            <person name="Isono K."/>
            <person name="Choi S."/>
            <person name="Ohtsubo E."/>
            <person name="Baba T."/>
            <person name="Wanner B.L."/>
            <person name="Mori H."/>
            <person name="Horiuchi T."/>
        </authorList>
    </citation>
    <scope>NUCLEOTIDE SEQUENCE [LARGE SCALE GENOMIC DNA]</scope>
    <source>
        <strain>K12 / W3110 / ATCC 27325 / DSM 5911</strain>
    </source>
</reference>
<reference key="5">
    <citation type="journal article" date="1994" name="J. Biol. Chem.">
        <title>Glutamine-dependent nitrogen transfer in Escherichia coli asparagine synthetase B. Searching for the catalytic triad.</title>
        <authorList>
            <person name="Boehlein S.K."/>
            <person name="Richards N.G."/>
            <person name="Schuster S.M."/>
        </authorList>
    </citation>
    <scope>PROTEIN SEQUENCE OF N-TERMINUS</scope>
    <scope>CLEAVAGE OF INITIATOR METHIONINE</scope>
    <scope>FUNCTION</scope>
    <scope>CATALYTIC ACTIVITY</scope>
    <scope>SUBSTRATE SPECIFICITY</scope>
    <scope>BIOPHYSICOCHEMICAL PROPERTIES</scope>
    <scope>MUTAGENESIS OF CYS-2; HIS-30; ASP-34; HIS-81 AND ALA-105</scope>
    <source>
        <strain>K12</strain>
    </source>
</reference>
<reference key="6">
    <citation type="journal article" date="1980" name="J. Bacteriol.">
        <title>Genetic and biomedical studies demonstrating a second gene coding for asparagine synthetase in Escherichia coli.</title>
        <authorList>
            <person name="Humbert R."/>
            <person name="Simoni R.D."/>
        </authorList>
    </citation>
    <scope>FUNCTION IN ASPARAGINE BIOSYNTHESIS</scope>
    <source>
        <strain>K12</strain>
    </source>
</reference>
<reference key="7">
    <citation type="journal article" date="1996" name="J. Med. Chem.">
        <title>Mapping the aspartic acid binding site of Escherichia coli asparagine synthetase B using substrate analogs.</title>
        <authorList>
            <person name="Parr I.B."/>
            <person name="Boehlein S.K."/>
            <person name="Dribben A.B."/>
            <person name="Schuster S.M."/>
            <person name="Richards N.G."/>
        </authorList>
    </citation>
    <scope>ACTIVITY REGULATION</scope>
    <scope>INHIBITION STUDIES</scope>
</reference>
<reference key="8">
    <citation type="journal article" date="2003" name="Arch. Biochem. Biophys.">
        <title>Revisiting the steady state kinetic mechanism of glutamine-dependent asparagine synthetase from Escherichia coli.</title>
        <authorList>
            <person name="Tesson A.R."/>
            <person name="Soper T.S."/>
            <person name="Ciustea M."/>
            <person name="Richards N.G."/>
        </authorList>
    </citation>
    <scope>KINETIC PARAMETERS</scope>
    <source>
        <strain>K12</strain>
    </source>
</reference>
<reference key="9">
    <citation type="journal article" date="2010" name="Biochemistry">
        <title>A conserved glutamate controls the commitment to acyl-adenylate formation in asparagine synthetase.</title>
        <authorList>
            <person name="Meyer M.E."/>
            <person name="Gutierrez J.A."/>
            <person name="Raushel F.M."/>
            <person name="Richards N.G."/>
        </authorList>
    </citation>
    <scope>FUNCTION</scope>
    <scope>CATALYTIC ACTIVITY</scope>
    <scope>MUTAGENESIS OF GLU-349</scope>
    <scope>KINETIC MODEL</scope>
    <source>
        <strain>K12</strain>
    </source>
</reference>
<reference key="10">
    <citation type="journal article" date="1999" name="Biochemistry">
        <title>Three-dimensional structure of Escherichia coli asparagine synthetase B: a short journey from substrate to product.</title>
        <authorList>
            <person name="Larsen T.M."/>
            <person name="Boehlein S.K."/>
            <person name="Schuster S.M."/>
            <person name="Richards N.G.J."/>
            <person name="Thoden J.B."/>
            <person name="Holden H.M."/>
            <person name="Rayment I."/>
        </authorList>
    </citation>
    <scope>X-RAY CRYSTALLOGRAPHY (2.0 ANGSTROMS) OF 2-554 OF MUTANT ALA-2 IN COMPLEX WITH AMP AND L-GLUTAMINE</scope>
    <scope>SUBUNIT</scope>
    <source>
        <strain>K12</strain>
    </source>
</reference>
<reference key="11">
    <citation type="journal article" date="2000" name="Biochemistry">
        <authorList>
            <person name="Larsen T.M."/>
            <person name="Boehlein S.K."/>
            <person name="Schuster S.M."/>
            <person name="Richards N.G.J."/>
            <person name="Thoden J.B."/>
            <person name="Holden H.M."/>
            <person name="Rayment I."/>
        </authorList>
    </citation>
    <scope>ERRATUM OF PUBMED:10587437</scope>
</reference>
<name>ASNB_ECOLI</name>
<comment type="function">
    <text evidence="4 5 6">Catalyzes the ATP-dependent conversion of aspartate into asparagine, using glutamine as a source of nitrogen. Can also use ammonia as the nitrogen source in vitro, albeit with lower efficiency. As nucleotide substrates, ATP and dATP are utilized at a similar rate in both the glutamine- and ammonia-dependent reactions, whereas GTP utilization is only 15% that of ATP, and CTP, UTP, ITP and XTP are very poor or not substrates. Also exhibits glutaminase activity.</text>
</comment>
<comment type="catalytic activity">
    <reaction evidence="4 6">
        <text>L-aspartate + L-glutamine + ATP + H2O = L-asparagine + L-glutamate + AMP + diphosphate + H(+)</text>
        <dbReference type="Rhea" id="RHEA:12228"/>
        <dbReference type="ChEBI" id="CHEBI:15377"/>
        <dbReference type="ChEBI" id="CHEBI:15378"/>
        <dbReference type="ChEBI" id="CHEBI:29985"/>
        <dbReference type="ChEBI" id="CHEBI:29991"/>
        <dbReference type="ChEBI" id="CHEBI:30616"/>
        <dbReference type="ChEBI" id="CHEBI:33019"/>
        <dbReference type="ChEBI" id="CHEBI:58048"/>
        <dbReference type="ChEBI" id="CHEBI:58359"/>
        <dbReference type="ChEBI" id="CHEBI:456215"/>
        <dbReference type="EC" id="6.3.5.4"/>
    </reaction>
</comment>
<comment type="activity regulation">
    <text evidence="7">Glutamine-dependent asparagine synthesis activity can be inhibited by aspartic acid analogs (such as a sulfinate derivative and (2S,3R)-2-amino-3-methylsuccinate) in vitro; the inhibition is competitive with respect to aspartate.</text>
</comment>
<comment type="biophysicochemical properties">
    <kinetics>
        <KM evidence="3 6">17 mM for ammonia</KM>
        <KM evidence="3 6">0.53 mM for aspartate (when assaying the ammonia-dependent synthetase reaction)</KM>
        <KM evidence="3 6">0.85 mM for aspartate (when assaying the glutamine-dependent synthetase reaction)</KM>
        <KM evidence="3 6">0.26 mM for ATP (when assaying the glutamine-dependent synthetase reaction)</KM>
        <KM evidence="3 6">0.66 mM for glutamine (when assaying the glutamine-dependent synthetase reaction)</KM>
    </kinetics>
    <phDependence>
        <text evidence="6">Optimum pH is 6.5-8.</text>
    </phDependence>
</comment>
<comment type="pathway">
    <text>Amino-acid biosynthesis; L-asparagine biosynthesis; L-asparagine from L-aspartate (L-Gln route): step 1/1.</text>
</comment>
<comment type="subunit">
    <text evidence="2">Homodimer.</text>
</comment>
<comment type="interaction">
    <interactant intactId="EBI-549123">
        <id>P22106</id>
    </interactant>
    <interactant intactId="EBI-549123">
        <id>P22106</id>
        <label>asnB</label>
    </interactant>
    <organismsDiffer>false</organismsDiffer>
    <experiments>3</experiments>
</comment>
<comment type="similarity">
    <text evidence="8">Belongs to the asparagine synthetase family.</text>
</comment>
<protein>
    <recommendedName>
        <fullName>Asparagine synthetase B [glutamine-hydrolyzing]</fullName>
        <shortName>AS-B</shortName>
        <ecNumber>6.3.5.4</ecNumber>
    </recommendedName>
</protein>
<organism>
    <name type="scientific">Escherichia coli (strain K12)</name>
    <dbReference type="NCBI Taxonomy" id="83333"/>
    <lineage>
        <taxon>Bacteria</taxon>
        <taxon>Pseudomonadati</taxon>
        <taxon>Pseudomonadota</taxon>
        <taxon>Gammaproteobacteria</taxon>
        <taxon>Enterobacterales</taxon>
        <taxon>Enterobacteriaceae</taxon>
        <taxon>Escherichia</taxon>
    </lineage>
</organism>
<keyword id="KW-0002">3D-structure</keyword>
<keyword id="KW-0028">Amino-acid biosynthesis</keyword>
<keyword id="KW-0061">Asparagine biosynthesis</keyword>
<keyword id="KW-0067">ATP-binding</keyword>
<keyword id="KW-0903">Direct protein sequencing</keyword>
<keyword id="KW-0315">Glutamine amidotransferase</keyword>
<keyword id="KW-0436">Ligase</keyword>
<keyword id="KW-0547">Nucleotide-binding</keyword>
<keyword id="KW-1185">Reference proteome</keyword>
<accession>P22106</accession>
<evidence type="ECO:0000255" key="1">
    <source>
        <dbReference type="PROSITE-ProRule" id="PRU00609"/>
    </source>
</evidence>
<evidence type="ECO:0000269" key="2">
    <source>
    </source>
</evidence>
<evidence type="ECO:0000269" key="3">
    <source>
    </source>
</evidence>
<evidence type="ECO:0000269" key="4">
    <source>
    </source>
</evidence>
<evidence type="ECO:0000269" key="5">
    <source>
    </source>
</evidence>
<evidence type="ECO:0000269" key="6">
    <source>
    </source>
</evidence>
<evidence type="ECO:0000269" key="7">
    <source>
    </source>
</evidence>
<evidence type="ECO:0000305" key="8"/>
<evidence type="ECO:0007829" key="9">
    <source>
        <dbReference type="PDB" id="1CT9"/>
    </source>
</evidence>
<gene>
    <name type="primary">asnB</name>
    <name type="ordered locus">b0674</name>
    <name type="ordered locus">JW0660</name>
</gene>
<proteinExistence type="evidence at protein level"/>
<feature type="initiator methionine" description="Removed" evidence="6">
    <location>
        <position position="1"/>
    </location>
</feature>
<feature type="chain" id="PRO_0000056931" description="Asparagine synthetase B [glutamine-hydrolyzing]">
    <location>
        <begin position="2"/>
        <end position="554"/>
    </location>
</feature>
<feature type="domain" description="Glutamine amidotransferase type-2" evidence="1">
    <location>
        <begin position="2"/>
        <end position="186"/>
    </location>
</feature>
<feature type="active site" description="For GATase activity">
    <location>
        <position position="2"/>
    </location>
</feature>
<feature type="binding site">
    <location>
        <begin position="50"/>
        <end position="54"/>
    </location>
    <ligand>
        <name>L-glutamine</name>
        <dbReference type="ChEBI" id="CHEBI:58359"/>
    </ligand>
</feature>
<feature type="binding site">
    <location>
        <begin position="75"/>
        <end position="77"/>
    </location>
    <ligand>
        <name>L-glutamine</name>
        <dbReference type="ChEBI" id="CHEBI:58359"/>
    </ligand>
</feature>
<feature type="binding site">
    <location>
        <position position="99"/>
    </location>
    <ligand>
        <name>L-glutamine</name>
        <dbReference type="ChEBI" id="CHEBI:58359"/>
    </ligand>
</feature>
<feature type="binding site">
    <location>
        <position position="233"/>
    </location>
    <ligand>
        <name>ATP</name>
        <dbReference type="ChEBI" id="CHEBI:30616"/>
    </ligand>
</feature>
<feature type="binding site">
    <location>
        <position position="273"/>
    </location>
    <ligand>
        <name>ATP</name>
        <dbReference type="ChEBI" id="CHEBI:30616"/>
    </ligand>
</feature>
<feature type="binding site">
    <location>
        <begin position="347"/>
        <end position="348"/>
    </location>
    <ligand>
        <name>ATP</name>
        <dbReference type="ChEBI" id="CHEBI:30616"/>
    </ligand>
</feature>
<feature type="site" description="Important for beta-aspartyl-AMP intermediate formation">
    <location>
        <position position="349"/>
    </location>
</feature>
<feature type="mutagenesis site" description="Loss of glutamine-dependent activity but no effect on ammonia-dependent asparagine synthetase activity." evidence="6">
    <original>C</original>
    <variation>A</variation>
    <variation>S</variation>
    <location>
        <position position="2"/>
    </location>
</feature>
<feature type="mutagenesis site" description="4,5-fold decrease in glutamine affinity." evidence="6">
    <original>H</original>
    <variation>A</variation>
    <location>
        <position position="30"/>
    </location>
</feature>
<feature type="mutagenesis site" description="Little effect on the kinetic properties." evidence="6">
    <original>D</original>
    <variation>N</variation>
    <variation>E</variation>
    <location>
        <position position="34"/>
    </location>
</feature>
<feature type="mutagenesis site" description="5-fold decrease in glutamine affinity." evidence="6">
    <original>H</original>
    <variation>A</variation>
    <location>
        <position position="81"/>
    </location>
</feature>
<feature type="mutagenesis site" description="Little effect on the kinetic properties." evidence="6">
    <original>A</original>
    <variation>H</variation>
    <location>
        <position position="105"/>
    </location>
</feature>
<feature type="mutagenesis site" description="Loss of glutamine- and ammonia-dependent synthetase activity, but still exhibits glutaminase activity." evidence="4">
    <original>E</original>
    <variation>A</variation>
    <variation>Q</variation>
    <location>
        <position position="349"/>
    </location>
</feature>
<feature type="mutagenesis site" description="5-fold increase in affinity for aspartate when assaying both the glutamine- and ammonia-dependent synthetase reactions, and 2-fold decrease in kcat for these reactions. Modifies the product glutamate/asparagine stoichiometry." evidence="4">
    <original>E</original>
    <variation>D</variation>
    <location>
        <position position="349"/>
    </location>
</feature>
<feature type="strand" evidence="9">
    <location>
        <begin position="3"/>
        <end position="9"/>
    </location>
</feature>
<feature type="helix" evidence="9">
    <location>
        <begin position="14"/>
        <end position="26"/>
    </location>
</feature>
<feature type="helix" evidence="9">
    <location>
        <begin position="27"/>
        <end position="31"/>
    </location>
</feature>
<feature type="strand" evidence="9">
    <location>
        <begin position="35"/>
        <end position="40"/>
    </location>
</feature>
<feature type="strand" evidence="9">
    <location>
        <begin position="42"/>
        <end position="50"/>
    </location>
</feature>
<feature type="turn" evidence="9">
    <location>
        <begin position="56"/>
        <end position="58"/>
    </location>
</feature>
<feature type="strand" evidence="9">
    <location>
        <begin position="61"/>
        <end position="64"/>
    </location>
</feature>
<feature type="strand" evidence="9">
    <location>
        <begin position="70"/>
        <end position="78"/>
    </location>
</feature>
<feature type="helix" evidence="9">
    <location>
        <begin position="81"/>
        <end position="88"/>
    </location>
</feature>
<feature type="turn" evidence="9">
    <location>
        <begin position="89"/>
        <end position="91"/>
    </location>
</feature>
<feature type="helix" evidence="9">
    <location>
        <begin position="99"/>
        <end position="101"/>
    </location>
</feature>
<feature type="helix" evidence="9">
    <location>
        <begin position="102"/>
        <end position="110"/>
    </location>
</feature>
<feature type="turn" evidence="9">
    <location>
        <begin position="111"/>
        <end position="114"/>
    </location>
</feature>
<feature type="helix" evidence="9">
    <location>
        <begin position="115"/>
        <end position="117"/>
    </location>
</feature>
<feature type="strand" evidence="9">
    <location>
        <begin position="120"/>
        <end position="128"/>
    </location>
</feature>
<feature type="turn" evidence="9">
    <location>
        <begin position="129"/>
        <end position="132"/>
    </location>
</feature>
<feature type="strand" evidence="9">
    <location>
        <begin position="133"/>
        <end position="138"/>
    </location>
</feature>
<feature type="strand" evidence="9">
    <location>
        <begin position="147"/>
        <end position="150"/>
    </location>
</feature>
<feature type="strand" evidence="9">
    <location>
        <begin position="156"/>
        <end position="161"/>
    </location>
</feature>
<feature type="helix" evidence="9">
    <location>
        <begin position="162"/>
        <end position="164"/>
    </location>
</feature>
<feature type="turn" evidence="9">
    <location>
        <begin position="165"/>
        <end position="168"/>
    </location>
</feature>
<feature type="strand" evidence="9">
    <location>
        <begin position="170"/>
        <end position="174"/>
    </location>
</feature>
<feature type="strand" evidence="9">
    <location>
        <begin position="179"/>
        <end position="182"/>
    </location>
</feature>
<feature type="turn" evidence="9">
    <location>
        <begin position="183"/>
        <end position="185"/>
    </location>
</feature>
<feature type="strand" evidence="9">
    <location>
        <begin position="187"/>
        <end position="190"/>
    </location>
</feature>
<feature type="helix" evidence="9">
    <location>
        <begin position="195"/>
        <end position="197"/>
    </location>
</feature>
<feature type="helix" evidence="9">
    <location>
        <begin position="199"/>
        <end position="202"/>
    </location>
</feature>
<feature type="helix" evidence="9">
    <location>
        <begin position="209"/>
        <end position="223"/>
    </location>
</feature>
<feature type="strand" evidence="9">
    <location>
        <begin position="230"/>
        <end position="233"/>
    </location>
</feature>
<feature type="helix" evidence="9">
    <location>
        <begin position="238"/>
        <end position="250"/>
    </location>
</feature>
<feature type="strand" evidence="9">
    <location>
        <begin position="269"/>
        <end position="275"/>
    </location>
</feature>
<feature type="helix" evidence="9">
    <location>
        <begin position="279"/>
        <end position="291"/>
    </location>
</feature>
<feature type="strand" evidence="9">
    <location>
        <begin position="294"/>
        <end position="299"/>
    </location>
</feature>
<feature type="helix" evidence="9">
    <location>
        <begin position="302"/>
        <end position="316"/>
    </location>
</feature>
<feature type="helix" evidence="9">
    <location>
        <begin position="321"/>
        <end position="339"/>
    </location>
</feature>
<feature type="strand" evidence="9">
    <location>
        <begin position="344"/>
        <end position="346"/>
    </location>
</feature>
<feature type="helix" evidence="9">
    <location>
        <begin position="351"/>
        <end position="355"/>
    </location>
</feature>
<feature type="helix" evidence="9">
    <location>
        <begin position="359"/>
        <end position="363"/>
    </location>
</feature>
<feature type="helix" evidence="9">
    <location>
        <begin position="367"/>
        <end position="380"/>
    </location>
</feature>
<feature type="helix" evidence="9">
    <location>
        <begin position="381"/>
        <end position="383"/>
    </location>
</feature>
<feature type="helix" evidence="9">
    <location>
        <begin position="385"/>
        <end position="394"/>
    </location>
</feature>
<feature type="turn" evidence="9">
    <location>
        <begin position="395"/>
        <end position="397"/>
    </location>
</feature>
<feature type="strand" evidence="9">
    <location>
        <begin position="399"/>
        <end position="401"/>
    </location>
</feature>
<feature type="helix" evidence="9">
    <location>
        <begin position="403"/>
        <end position="405"/>
    </location>
</feature>
<feature type="helix" evidence="9">
    <location>
        <begin position="407"/>
        <end position="415"/>
    </location>
</feature>
<feature type="helix" evidence="9">
    <location>
        <begin position="418"/>
        <end position="420"/>
    </location>
</feature>
<feature type="helix" evidence="9">
    <location>
        <begin position="431"/>
        <end position="437"/>
    </location>
</feature>
<feature type="helix" evidence="9">
    <location>
        <begin position="438"/>
        <end position="440"/>
    </location>
</feature>
<feature type="helix" evidence="9">
    <location>
        <begin position="443"/>
        <end position="446"/>
    </location>
</feature>
<feature type="helix" evidence="9">
    <location>
        <begin position="460"/>
        <end position="472"/>
    </location>
</feature>
<feature type="helix" evidence="9">
    <location>
        <begin position="475"/>
        <end position="479"/>
    </location>
</feature>
<feature type="helix" evidence="9">
    <location>
        <begin position="481"/>
        <end position="484"/>
    </location>
</feature>
<feature type="helix" evidence="9">
    <location>
        <begin position="493"/>
        <end position="505"/>
    </location>
</feature>
<feature type="helix" evidence="9">
    <location>
        <begin position="509"/>
        <end position="514"/>
    </location>
</feature>
<dbReference type="EC" id="6.3.5.4"/>
<dbReference type="EMBL" id="J05554">
    <property type="protein sequence ID" value="AAA23498.1"/>
    <property type="molecule type" value="Genomic_DNA"/>
</dbReference>
<dbReference type="EMBL" id="U00096">
    <property type="protein sequence ID" value="AAC73768.1"/>
    <property type="molecule type" value="Genomic_DNA"/>
</dbReference>
<dbReference type="EMBL" id="AP009048">
    <property type="protein sequence ID" value="BAA35317.1"/>
    <property type="molecule type" value="Genomic_DNA"/>
</dbReference>
<dbReference type="PIR" id="A36616">
    <property type="entry name" value="AJECN"/>
</dbReference>
<dbReference type="RefSeq" id="NP_415200.1">
    <property type="nucleotide sequence ID" value="NC_000913.3"/>
</dbReference>
<dbReference type="RefSeq" id="WP_000337077.1">
    <property type="nucleotide sequence ID" value="NZ_SSZK01000045.1"/>
</dbReference>
<dbReference type="PDB" id="1CT9">
    <property type="method" value="X-ray"/>
    <property type="resolution" value="2.00 A"/>
    <property type="chains" value="A/B/C/D=2-554"/>
</dbReference>
<dbReference type="PDBsum" id="1CT9"/>
<dbReference type="SMR" id="P22106"/>
<dbReference type="BioGRID" id="4261812">
    <property type="interactions" value="421"/>
</dbReference>
<dbReference type="BioGRID" id="849659">
    <property type="interactions" value="1"/>
</dbReference>
<dbReference type="DIP" id="DIP-9177N"/>
<dbReference type="FunCoup" id="P22106">
    <property type="interactions" value="756"/>
</dbReference>
<dbReference type="IntAct" id="P22106">
    <property type="interactions" value="7"/>
</dbReference>
<dbReference type="STRING" id="511145.b0674"/>
<dbReference type="MEROPS" id="C44.976"/>
<dbReference type="jPOST" id="P22106"/>
<dbReference type="PaxDb" id="511145-b0674"/>
<dbReference type="EnsemblBacteria" id="AAC73768">
    <property type="protein sequence ID" value="AAC73768"/>
    <property type="gene ID" value="b0674"/>
</dbReference>
<dbReference type="GeneID" id="89519974"/>
<dbReference type="GeneID" id="945281"/>
<dbReference type="KEGG" id="ecj:JW0660"/>
<dbReference type="KEGG" id="eco:b0674"/>
<dbReference type="KEGG" id="ecoc:C3026_03350"/>
<dbReference type="PATRIC" id="fig|1411691.4.peg.1605"/>
<dbReference type="EchoBASE" id="EB0090"/>
<dbReference type="eggNOG" id="COG0367">
    <property type="taxonomic scope" value="Bacteria"/>
</dbReference>
<dbReference type="HOGENOM" id="CLU_014658_2_2_6"/>
<dbReference type="InParanoid" id="P22106"/>
<dbReference type="OMA" id="GIVCAFD"/>
<dbReference type="OrthoDB" id="9763290at2"/>
<dbReference type="PhylomeDB" id="P22106"/>
<dbReference type="BioCyc" id="EcoCyc:ASNSYNB-MONOMER"/>
<dbReference type="BioCyc" id="MetaCyc:ASNSYNB-MONOMER"/>
<dbReference type="BRENDA" id="6.3.5.4">
    <property type="organism ID" value="2026"/>
</dbReference>
<dbReference type="UniPathway" id="UPA00134">
    <property type="reaction ID" value="UER00195"/>
</dbReference>
<dbReference type="EvolutionaryTrace" id="P22106"/>
<dbReference type="PRO" id="PR:P22106"/>
<dbReference type="Proteomes" id="UP000000625">
    <property type="component" value="Chromosome"/>
</dbReference>
<dbReference type="GO" id="GO:0005737">
    <property type="term" value="C:cytoplasm"/>
    <property type="evidence" value="ECO:0000314"/>
    <property type="project" value="EcoliWiki"/>
</dbReference>
<dbReference type="GO" id="GO:0005829">
    <property type="term" value="C:cytosol"/>
    <property type="evidence" value="ECO:0000314"/>
    <property type="project" value="EcoCyc"/>
</dbReference>
<dbReference type="GO" id="GO:0016597">
    <property type="term" value="F:amino acid binding"/>
    <property type="evidence" value="ECO:0000314"/>
    <property type="project" value="UniProtKB"/>
</dbReference>
<dbReference type="GO" id="GO:0004066">
    <property type="term" value="F:asparagine synthase (glutamine-hydrolyzing) activity"/>
    <property type="evidence" value="ECO:0000314"/>
    <property type="project" value="UniProtKB"/>
</dbReference>
<dbReference type="GO" id="GO:0004071">
    <property type="term" value="F:aspartate-ammonia ligase activity"/>
    <property type="evidence" value="ECO:0000314"/>
    <property type="project" value="UniProtKB"/>
</dbReference>
<dbReference type="GO" id="GO:0005524">
    <property type="term" value="F:ATP binding"/>
    <property type="evidence" value="ECO:0000314"/>
    <property type="project" value="UniProtKB"/>
</dbReference>
<dbReference type="GO" id="GO:0042802">
    <property type="term" value="F:identical protein binding"/>
    <property type="evidence" value="ECO:0000353"/>
    <property type="project" value="IntAct"/>
</dbReference>
<dbReference type="GO" id="GO:0042803">
    <property type="term" value="F:protein homodimerization activity"/>
    <property type="evidence" value="ECO:0000353"/>
    <property type="project" value="EcoCyc"/>
</dbReference>
<dbReference type="GO" id="GO:0008652">
    <property type="term" value="P:amino acid biosynthetic process"/>
    <property type="evidence" value="ECO:0000315"/>
    <property type="project" value="EcoliWiki"/>
</dbReference>
<dbReference type="GO" id="GO:0009063">
    <property type="term" value="P:amino acid catabolic process"/>
    <property type="evidence" value="ECO:0000315"/>
    <property type="project" value="EcoliWiki"/>
</dbReference>
<dbReference type="GO" id="GO:0006529">
    <property type="term" value="P:asparagine biosynthetic process"/>
    <property type="evidence" value="ECO:0000314"/>
    <property type="project" value="UniProtKB"/>
</dbReference>
<dbReference type="GO" id="GO:0006541">
    <property type="term" value="P:glutamine metabolic process"/>
    <property type="evidence" value="ECO:0000315"/>
    <property type="project" value="EcoliWiki"/>
</dbReference>
<dbReference type="GO" id="GO:0070981">
    <property type="term" value="P:L-asparagine biosynthetic process"/>
    <property type="evidence" value="ECO:0007669"/>
    <property type="project" value="UniProtKB-UniPathway"/>
</dbReference>
<dbReference type="CDD" id="cd01991">
    <property type="entry name" value="Asn_synthase_B_C"/>
    <property type="match status" value="1"/>
</dbReference>
<dbReference type="CDD" id="cd00712">
    <property type="entry name" value="AsnB"/>
    <property type="match status" value="1"/>
</dbReference>
<dbReference type="FunFam" id="3.40.50.620:FF:000031">
    <property type="entry name" value="Asparagine synthase B"/>
    <property type="match status" value="1"/>
</dbReference>
<dbReference type="FunFam" id="3.60.20.10:FF:000037">
    <property type="entry name" value="Asparagine synthetase B"/>
    <property type="match status" value="1"/>
</dbReference>
<dbReference type="Gene3D" id="3.60.20.10">
    <property type="entry name" value="Glutamine Phosphoribosylpyrophosphate, subunit 1, domain 1"/>
    <property type="match status" value="1"/>
</dbReference>
<dbReference type="Gene3D" id="3.40.50.620">
    <property type="entry name" value="HUPs"/>
    <property type="match status" value="1"/>
</dbReference>
<dbReference type="InterPro" id="IPR006426">
    <property type="entry name" value="Asn_synth_AEB"/>
</dbReference>
<dbReference type="InterPro" id="IPR001962">
    <property type="entry name" value="Asn_synthase"/>
</dbReference>
<dbReference type="InterPro" id="IPR050795">
    <property type="entry name" value="Asn_Synthetase"/>
</dbReference>
<dbReference type="InterPro" id="IPR033738">
    <property type="entry name" value="AsnB_N"/>
</dbReference>
<dbReference type="InterPro" id="IPR017932">
    <property type="entry name" value="GATase_2_dom"/>
</dbReference>
<dbReference type="InterPro" id="IPR029055">
    <property type="entry name" value="Ntn_hydrolases_N"/>
</dbReference>
<dbReference type="InterPro" id="IPR014729">
    <property type="entry name" value="Rossmann-like_a/b/a_fold"/>
</dbReference>
<dbReference type="NCBIfam" id="TIGR01536">
    <property type="entry name" value="asn_synth_AEB"/>
    <property type="match status" value="1"/>
</dbReference>
<dbReference type="NCBIfam" id="NF006949">
    <property type="entry name" value="PRK09431.1"/>
    <property type="match status" value="1"/>
</dbReference>
<dbReference type="PANTHER" id="PTHR11772">
    <property type="entry name" value="ASPARAGINE SYNTHETASE"/>
    <property type="match status" value="1"/>
</dbReference>
<dbReference type="PANTHER" id="PTHR11772:SF2">
    <property type="entry name" value="ASPARAGINE SYNTHETASE [GLUTAMINE-HYDROLYZING]"/>
    <property type="match status" value="1"/>
</dbReference>
<dbReference type="Pfam" id="PF00733">
    <property type="entry name" value="Asn_synthase"/>
    <property type="match status" value="1"/>
</dbReference>
<dbReference type="Pfam" id="PF13537">
    <property type="entry name" value="GATase_7"/>
    <property type="match status" value="1"/>
</dbReference>
<dbReference type="PIRSF" id="PIRSF001589">
    <property type="entry name" value="Asn_synthetase_glu-h"/>
    <property type="match status" value="1"/>
</dbReference>
<dbReference type="SUPFAM" id="SSF52402">
    <property type="entry name" value="Adenine nucleotide alpha hydrolases-like"/>
    <property type="match status" value="1"/>
</dbReference>
<dbReference type="SUPFAM" id="SSF56235">
    <property type="entry name" value="N-terminal nucleophile aminohydrolases (Ntn hydrolases)"/>
    <property type="match status" value="1"/>
</dbReference>
<dbReference type="PROSITE" id="PS51278">
    <property type="entry name" value="GATASE_TYPE_2"/>
    <property type="match status" value="1"/>
</dbReference>